<dbReference type="EMBL" id="X92868">
    <property type="protein sequence ID" value="CAA63459.1"/>
    <property type="molecule type" value="Genomic_DNA"/>
</dbReference>
<dbReference type="EMBL" id="AL009126">
    <property type="protein sequence ID" value="CAB14651.2"/>
    <property type="molecule type" value="Genomic_DNA"/>
</dbReference>
<dbReference type="PIR" id="B69580">
    <property type="entry name" value="B69580"/>
</dbReference>
<dbReference type="RefSeq" id="NP_390587.2">
    <property type="nucleotide sequence ID" value="NC_000964.3"/>
</dbReference>
<dbReference type="RefSeq" id="WP_010886581.1">
    <property type="nucleotide sequence ID" value="NZ_OZ025638.1"/>
</dbReference>
<dbReference type="SMR" id="O06005"/>
<dbReference type="FunCoup" id="O06005">
    <property type="interactions" value="128"/>
</dbReference>
<dbReference type="STRING" id="224308.BSU27090"/>
<dbReference type="PaxDb" id="224308-BSU27090"/>
<dbReference type="EnsemblBacteria" id="CAB14651">
    <property type="protein sequence ID" value="CAB14651"/>
    <property type="gene ID" value="BSU_27090"/>
</dbReference>
<dbReference type="GeneID" id="937231"/>
<dbReference type="KEGG" id="bsu:BSU27090"/>
<dbReference type="PATRIC" id="fig|224308.179.peg.2942"/>
<dbReference type="eggNOG" id="COG1113">
    <property type="taxonomic scope" value="Bacteria"/>
</dbReference>
<dbReference type="InParanoid" id="O06005"/>
<dbReference type="OrthoDB" id="9780162at2"/>
<dbReference type="PhylomeDB" id="O06005"/>
<dbReference type="BioCyc" id="BSUB:BSU27090-MONOMER"/>
<dbReference type="Proteomes" id="UP000001570">
    <property type="component" value="Chromosome"/>
</dbReference>
<dbReference type="GO" id="GO:0005886">
    <property type="term" value="C:plasma membrane"/>
    <property type="evidence" value="ECO:0007669"/>
    <property type="project" value="UniProtKB-SubCell"/>
</dbReference>
<dbReference type="GO" id="GO:0006865">
    <property type="term" value="P:amino acid transport"/>
    <property type="evidence" value="ECO:0007669"/>
    <property type="project" value="UniProtKB-KW"/>
</dbReference>
<dbReference type="GO" id="GO:0055085">
    <property type="term" value="P:transmembrane transport"/>
    <property type="evidence" value="ECO:0007669"/>
    <property type="project" value="InterPro"/>
</dbReference>
<dbReference type="FunFam" id="1.20.1740.10:FF:000001">
    <property type="entry name" value="Amino acid permease"/>
    <property type="match status" value="1"/>
</dbReference>
<dbReference type="Gene3D" id="1.20.1740.10">
    <property type="entry name" value="Amino acid/polyamine transporter I"/>
    <property type="match status" value="1"/>
</dbReference>
<dbReference type="InterPro" id="IPR004841">
    <property type="entry name" value="AA-permease/SLC12A_dom"/>
</dbReference>
<dbReference type="InterPro" id="IPR004840">
    <property type="entry name" value="Amino_acid_permease_CS"/>
</dbReference>
<dbReference type="PANTHER" id="PTHR43495:SF2">
    <property type="entry name" value="D-SERINE_D-ALANINE_GLYCINE TRANSPORTER"/>
    <property type="match status" value="1"/>
</dbReference>
<dbReference type="PANTHER" id="PTHR43495">
    <property type="entry name" value="GABA PERMEASE"/>
    <property type="match status" value="1"/>
</dbReference>
<dbReference type="Pfam" id="PF00324">
    <property type="entry name" value="AA_permease"/>
    <property type="match status" value="1"/>
</dbReference>
<dbReference type="PIRSF" id="PIRSF006060">
    <property type="entry name" value="AA_transporter"/>
    <property type="match status" value="1"/>
</dbReference>
<dbReference type="PROSITE" id="PS00218">
    <property type="entry name" value="AMINO_ACID_PERMEASE_1"/>
    <property type="match status" value="1"/>
</dbReference>
<feature type="chain" id="PRO_0000054184" description="Amino-acid permease AapA">
    <location>
        <begin position="1"/>
        <end position="462"/>
    </location>
</feature>
<feature type="transmembrane region" description="Helical" evidence="1">
    <location>
        <begin position="27"/>
        <end position="47"/>
    </location>
</feature>
<feature type="transmembrane region" description="Helical" evidence="1">
    <location>
        <begin position="48"/>
        <end position="68"/>
    </location>
</feature>
<feature type="transmembrane region" description="Helical" evidence="1">
    <location>
        <begin position="96"/>
        <end position="116"/>
    </location>
</feature>
<feature type="transmembrane region" description="Helical" evidence="1">
    <location>
        <begin position="134"/>
        <end position="154"/>
    </location>
</feature>
<feature type="transmembrane region" description="Helical" evidence="1">
    <location>
        <begin position="160"/>
        <end position="180"/>
    </location>
</feature>
<feature type="transmembrane region" description="Helical" evidence="1">
    <location>
        <begin position="209"/>
        <end position="229"/>
    </location>
</feature>
<feature type="transmembrane region" description="Helical" evidence="1">
    <location>
        <begin position="252"/>
        <end position="272"/>
    </location>
</feature>
<feature type="transmembrane region" description="Helical" evidence="1">
    <location>
        <begin position="279"/>
        <end position="299"/>
    </location>
</feature>
<feature type="transmembrane region" description="Helical" evidence="1">
    <location>
        <begin position="343"/>
        <end position="363"/>
    </location>
</feature>
<feature type="transmembrane region" description="Helical" evidence="1">
    <location>
        <begin position="366"/>
        <end position="386"/>
    </location>
</feature>
<feature type="transmembrane region" description="Helical" evidence="1">
    <location>
        <begin position="410"/>
        <end position="430"/>
    </location>
</feature>
<feature type="transmembrane region" description="Helical" evidence="1">
    <location>
        <begin position="435"/>
        <end position="455"/>
    </location>
</feature>
<feature type="sequence conflict" description="In Ref. 1; CAA63459." evidence="2" ref="1">
    <original>M</original>
    <variation>I</variation>
    <location>
        <position position="68"/>
    </location>
</feature>
<feature type="sequence conflict" description="In Ref. 1; CAA63459." evidence="2" ref="1">
    <original>RRGHKVK</original>
    <variation>QQRT</variation>
    <location>
        <begin position="456"/>
        <end position="462"/>
    </location>
</feature>
<gene>
    <name type="primary">aapA</name>
    <name type="ordered locus">BSU27090</name>
</gene>
<evidence type="ECO:0000255" key="1"/>
<evidence type="ECO:0000305" key="2"/>
<proteinExistence type="inferred from homology"/>
<keyword id="KW-0029">Amino-acid transport</keyword>
<keyword id="KW-1003">Cell membrane</keyword>
<keyword id="KW-0472">Membrane</keyword>
<keyword id="KW-1185">Reference proteome</keyword>
<keyword id="KW-0812">Transmembrane</keyword>
<keyword id="KW-1133">Transmembrane helix</keyword>
<keyword id="KW-0813">Transport</keyword>
<accession>O06005</accession>
<sequence>MIGNSSKDNFGQQQKLSRGLKNRHIQLMAIGGAIGTGLFLGSGKSIHFAGPSILFAYLITGVFCFFIMRSLGELLLSNAGYHSFVDFVRDYLGNMAAFITGWTYWFCWISLAMADLTAVGIYTQYWLPDVPQWLPGLLALIILLIMNLATVKLFGELEFWFALIKVIAILALIVTGILLIAKGFSAASGPASLNNLWSHGGMFPNGWHGFILSFQMVVFAFVGIELVGLTAGETENPQKVIPKAINQIPVRILLFYVGALFVIMCIYPWNVLNPNESPFVQVFSAVGIVVAASLINFVVLTSAASAANSALFSTSRMVYSLAKDHHAPGLLKKLTSSNVPSNALFFSSIAILIGVSLNYLMPEQVFTLITSVSTICFIFIWGITVICHLKYRKTRQHEAKANKFKMPFYPLSNYLTLAFLAFILVILALANDTRIALFVTPVWFVLLIILYKVQTRRGHKVK</sequence>
<comment type="function">
    <text>Probable amino-acid or metabolite transport protein.</text>
</comment>
<comment type="subcellular location">
    <subcellularLocation>
        <location evidence="2">Cell membrane</location>
        <topology evidence="2">Multi-pass membrane protein</topology>
    </subcellularLocation>
</comment>
<comment type="similarity">
    <text evidence="2">Belongs to the amino acid-polyamine-organocation (APC) superfamily.</text>
</comment>
<organism>
    <name type="scientific">Bacillus subtilis (strain 168)</name>
    <dbReference type="NCBI Taxonomy" id="224308"/>
    <lineage>
        <taxon>Bacteria</taxon>
        <taxon>Bacillati</taxon>
        <taxon>Bacillota</taxon>
        <taxon>Bacilli</taxon>
        <taxon>Bacillales</taxon>
        <taxon>Bacillaceae</taxon>
        <taxon>Bacillus</taxon>
    </lineage>
</organism>
<name>AAPA_BACSU</name>
<protein>
    <recommendedName>
        <fullName>Amino-acid permease AapA</fullName>
    </recommendedName>
</protein>
<reference key="1">
    <citation type="journal article" date="1997" name="Microbiology">
        <title>A 23911 bp region of the Bacillus subtilis genome comprising genes located upstream and downstream of the lev operon.</title>
        <authorList>
            <person name="Parro V."/>
            <person name="San Roman M."/>
            <person name="Galindo I."/>
            <person name="Purnelle B."/>
            <person name="Bolotin A."/>
            <person name="Sorokin A."/>
            <person name="Mellado R.P."/>
        </authorList>
    </citation>
    <scope>NUCLEOTIDE SEQUENCE [GENOMIC DNA]</scope>
    <source>
        <strain>168</strain>
    </source>
</reference>
<reference key="2">
    <citation type="journal article" date="1997" name="Nature">
        <title>The complete genome sequence of the Gram-positive bacterium Bacillus subtilis.</title>
        <authorList>
            <person name="Kunst F."/>
            <person name="Ogasawara N."/>
            <person name="Moszer I."/>
            <person name="Albertini A.M."/>
            <person name="Alloni G."/>
            <person name="Azevedo V."/>
            <person name="Bertero M.G."/>
            <person name="Bessieres P."/>
            <person name="Bolotin A."/>
            <person name="Borchert S."/>
            <person name="Borriss R."/>
            <person name="Boursier L."/>
            <person name="Brans A."/>
            <person name="Braun M."/>
            <person name="Brignell S.C."/>
            <person name="Bron S."/>
            <person name="Brouillet S."/>
            <person name="Bruschi C.V."/>
            <person name="Caldwell B."/>
            <person name="Capuano V."/>
            <person name="Carter N.M."/>
            <person name="Choi S.-K."/>
            <person name="Codani J.-J."/>
            <person name="Connerton I.F."/>
            <person name="Cummings N.J."/>
            <person name="Daniel R.A."/>
            <person name="Denizot F."/>
            <person name="Devine K.M."/>
            <person name="Duesterhoeft A."/>
            <person name="Ehrlich S.D."/>
            <person name="Emmerson P.T."/>
            <person name="Entian K.-D."/>
            <person name="Errington J."/>
            <person name="Fabret C."/>
            <person name="Ferrari E."/>
            <person name="Foulger D."/>
            <person name="Fritz C."/>
            <person name="Fujita M."/>
            <person name="Fujita Y."/>
            <person name="Fuma S."/>
            <person name="Galizzi A."/>
            <person name="Galleron N."/>
            <person name="Ghim S.-Y."/>
            <person name="Glaser P."/>
            <person name="Goffeau A."/>
            <person name="Golightly E.J."/>
            <person name="Grandi G."/>
            <person name="Guiseppi G."/>
            <person name="Guy B.J."/>
            <person name="Haga K."/>
            <person name="Haiech J."/>
            <person name="Harwood C.R."/>
            <person name="Henaut A."/>
            <person name="Hilbert H."/>
            <person name="Holsappel S."/>
            <person name="Hosono S."/>
            <person name="Hullo M.-F."/>
            <person name="Itaya M."/>
            <person name="Jones L.-M."/>
            <person name="Joris B."/>
            <person name="Karamata D."/>
            <person name="Kasahara Y."/>
            <person name="Klaerr-Blanchard M."/>
            <person name="Klein C."/>
            <person name="Kobayashi Y."/>
            <person name="Koetter P."/>
            <person name="Koningstein G."/>
            <person name="Krogh S."/>
            <person name="Kumano M."/>
            <person name="Kurita K."/>
            <person name="Lapidus A."/>
            <person name="Lardinois S."/>
            <person name="Lauber J."/>
            <person name="Lazarevic V."/>
            <person name="Lee S.-M."/>
            <person name="Levine A."/>
            <person name="Liu H."/>
            <person name="Masuda S."/>
            <person name="Mauel C."/>
            <person name="Medigue C."/>
            <person name="Medina N."/>
            <person name="Mellado R.P."/>
            <person name="Mizuno M."/>
            <person name="Moestl D."/>
            <person name="Nakai S."/>
            <person name="Noback M."/>
            <person name="Noone D."/>
            <person name="O'Reilly M."/>
            <person name="Ogawa K."/>
            <person name="Ogiwara A."/>
            <person name="Oudega B."/>
            <person name="Park S.-H."/>
            <person name="Parro V."/>
            <person name="Pohl T.M."/>
            <person name="Portetelle D."/>
            <person name="Porwollik S."/>
            <person name="Prescott A.M."/>
            <person name="Presecan E."/>
            <person name="Pujic P."/>
            <person name="Purnelle B."/>
            <person name="Rapoport G."/>
            <person name="Rey M."/>
            <person name="Reynolds S."/>
            <person name="Rieger M."/>
            <person name="Rivolta C."/>
            <person name="Rocha E."/>
            <person name="Roche B."/>
            <person name="Rose M."/>
            <person name="Sadaie Y."/>
            <person name="Sato T."/>
            <person name="Scanlan E."/>
            <person name="Schleich S."/>
            <person name="Schroeter R."/>
            <person name="Scoffone F."/>
            <person name="Sekiguchi J."/>
            <person name="Sekowska A."/>
            <person name="Seror S.J."/>
            <person name="Serror P."/>
            <person name="Shin B.-S."/>
            <person name="Soldo B."/>
            <person name="Sorokin A."/>
            <person name="Tacconi E."/>
            <person name="Takagi T."/>
            <person name="Takahashi H."/>
            <person name="Takemaru K."/>
            <person name="Takeuchi M."/>
            <person name="Tamakoshi A."/>
            <person name="Tanaka T."/>
            <person name="Terpstra P."/>
            <person name="Tognoni A."/>
            <person name="Tosato V."/>
            <person name="Uchiyama S."/>
            <person name="Vandenbol M."/>
            <person name="Vannier F."/>
            <person name="Vassarotti A."/>
            <person name="Viari A."/>
            <person name="Wambutt R."/>
            <person name="Wedler E."/>
            <person name="Wedler H."/>
            <person name="Weitzenegger T."/>
            <person name="Winters P."/>
            <person name="Wipat A."/>
            <person name="Yamamoto H."/>
            <person name="Yamane K."/>
            <person name="Yasumoto K."/>
            <person name="Yata K."/>
            <person name="Yoshida K."/>
            <person name="Yoshikawa H.-F."/>
            <person name="Zumstein E."/>
            <person name="Yoshikawa H."/>
            <person name="Danchin A."/>
        </authorList>
    </citation>
    <scope>NUCLEOTIDE SEQUENCE [LARGE SCALE GENOMIC DNA]</scope>
    <source>
        <strain>168</strain>
    </source>
</reference>
<reference key="3">
    <citation type="journal article" date="2009" name="Microbiology">
        <title>From a consortium sequence to a unified sequence: the Bacillus subtilis 168 reference genome a decade later.</title>
        <authorList>
            <person name="Barbe V."/>
            <person name="Cruveiller S."/>
            <person name="Kunst F."/>
            <person name="Lenoble P."/>
            <person name="Meurice G."/>
            <person name="Sekowska A."/>
            <person name="Vallenet D."/>
            <person name="Wang T."/>
            <person name="Moszer I."/>
            <person name="Medigue C."/>
            <person name="Danchin A."/>
        </authorList>
    </citation>
    <scope>SEQUENCE REVISION TO 68 AND C-TERMINUS</scope>
</reference>